<keyword id="KW-1003">Cell membrane</keyword>
<keyword id="KW-1015">Disulfide bond</keyword>
<keyword id="KW-0297">G-protein coupled receptor</keyword>
<keyword id="KW-0325">Glycoprotein</keyword>
<keyword id="KW-0472">Membrane</keyword>
<keyword id="KW-0552">Olfaction</keyword>
<keyword id="KW-0675">Receptor</keyword>
<keyword id="KW-1185">Reference proteome</keyword>
<keyword id="KW-0716">Sensory transduction</keyword>
<keyword id="KW-0807">Transducer</keyword>
<keyword id="KW-0812">Transmembrane</keyword>
<keyword id="KW-1133">Transmembrane helix</keyword>
<reference key="1">
    <citation type="submission" date="2001-07" db="EMBL/GenBank/DDBJ databases">
        <title>Genome-wide discovery and analysis of human seven transmembrane helix receptor genes.</title>
        <authorList>
            <person name="Suwa M."/>
            <person name="Sato T."/>
            <person name="Okouchi I."/>
            <person name="Arita M."/>
            <person name="Futami K."/>
            <person name="Matsumoto S."/>
            <person name="Tsutsumi S."/>
            <person name="Aburatani H."/>
            <person name="Asai K."/>
            <person name="Akiyama Y."/>
        </authorList>
    </citation>
    <scope>NUCLEOTIDE SEQUENCE [GENOMIC DNA]</scope>
</reference>
<reference key="2">
    <citation type="journal article" date="2004" name="Proc. Natl. Acad. Sci. U.S.A.">
        <title>The human olfactory receptor gene family.</title>
        <authorList>
            <person name="Malnic B."/>
            <person name="Godfrey P.A."/>
            <person name="Buck L.B."/>
        </authorList>
    </citation>
    <scope>IDENTIFICATION</scope>
</reference>
<reference key="3">
    <citation type="journal article" date="2004" name="Proc. Natl. Acad. Sci. U.S.A.">
        <authorList>
            <person name="Malnic B."/>
            <person name="Godfrey P.A."/>
            <person name="Buck L.B."/>
        </authorList>
    </citation>
    <scope>ERRATUM OF PUBMED:14983052</scope>
</reference>
<organism>
    <name type="scientific">Homo sapiens</name>
    <name type="common">Human</name>
    <dbReference type="NCBI Taxonomy" id="9606"/>
    <lineage>
        <taxon>Eukaryota</taxon>
        <taxon>Metazoa</taxon>
        <taxon>Chordata</taxon>
        <taxon>Craniata</taxon>
        <taxon>Vertebrata</taxon>
        <taxon>Euteleostomi</taxon>
        <taxon>Mammalia</taxon>
        <taxon>Eutheria</taxon>
        <taxon>Euarchontoglires</taxon>
        <taxon>Primates</taxon>
        <taxon>Haplorrhini</taxon>
        <taxon>Catarrhini</taxon>
        <taxon>Hominidae</taxon>
        <taxon>Homo</taxon>
    </lineage>
</organism>
<proteinExistence type="uncertain"/>
<feature type="chain" id="PRO_0000150784" description="Putative olfactory receptor 52L2">
    <location>
        <begin position="1"/>
        <end position="319"/>
    </location>
</feature>
<feature type="topological domain" description="Extracellular" evidence="1">
    <location>
        <begin position="1"/>
        <end position="43"/>
    </location>
</feature>
<feature type="transmembrane region" description="Helical; Name=1" evidence="1">
    <location>
        <begin position="44"/>
        <end position="64"/>
    </location>
</feature>
<feature type="topological domain" description="Cytoplasmic" evidence="1">
    <location>
        <begin position="65"/>
        <end position="72"/>
    </location>
</feature>
<feature type="transmembrane region" description="Helical; Name=2" evidence="1">
    <location>
        <begin position="73"/>
        <end position="93"/>
    </location>
</feature>
<feature type="topological domain" description="Extracellular" evidence="1">
    <location>
        <begin position="94"/>
        <end position="117"/>
    </location>
</feature>
<feature type="transmembrane region" description="Helical; Name=3" evidence="1">
    <location>
        <begin position="118"/>
        <end position="138"/>
    </location>
</feature>
<feature type="topological domain" description="Cytoplasmic" evidence="1">
    <location>
        <begin position="139"/>
        <end position="157"/>
    </location>
</feature>
<feature type="transmembrane region" description="Helical; Name=4" evidence="1">
    <location>
        <begin position="158"/>
        <end position="178"/>
    </location>
</feature>
<feature type="topological domain" description="Extracellular" evidence="1">
    <location>
        <begin position="179"/>
        <end position="214"/>
    </location>
</feature>
<feature type="transmembrane region" description="Helical; Name=5" evidence="1">
    <location>
        <begin position="215"/>
        <end position="235"/>
    </location>
</feature>
<feature type="topological domain" description="Cytoplasmic" evidence="1">
    <location>
        <begin position="236"/>
        <end position="255"/>
    </location>
</feature>
<feature type="transmembrane region" description="Helical; Name=6" evidence="1">
    <location>
        <begin position="256"/>
        <end position="276"/>
    </location>
</feature>
<feature type="topological domain" description="Extracellular" evidence="1">
    <location>
        <begin position="277"/>
        <end position="291"/>
    </location>
</feature>
<feature type="transmembrane region" description="Helical; Name=7" evidence="1">
    <location>
        <begin position="292"/>
        <end position="312"/>
    </location>
</feature>
<feature type="topological domain" description="Cytoplasmic" evidence="1">
    <location>
        <begin position="313"/>
        <end position="319"/>
    </location>
</feature>
<feature type="glycosylation site" description="N-linked (GlcNAc...) asparagine" evidence="1">
    <location>
        <position position="20"/>
    </location>
</feature>
<feature type="disulfide bond" evidence="2">
    <location>
        <begin position="115"/>
        <end position="207"/>
    </location>
</feature>
<evidence type="ECO:0000255" key="1"/>
<evidence type="ECO:0000255" key="2">
    <source>
        <dbReference type="PROSITE-ProRule" id="PRU00521"/>
    </source>
</evidence>
<evidence type="ECO:0000305" key="3"/>
<accession>Q8NGH6</accession>
<accession>Q6IFK8</accession>
<gene>
    <name type="primary">OR52L2P</name>
    <name type="synonym">OR52L2</name>
</gene>
<comment type="function">
    <text evidence="3">Odorant receptor.</text>
</comment>
<comment type="subcellular location">
    <subcellularLocation>
        <location>Cell membrane</location>
        <topology>Multi-pass membrane protein</topology>
    </subcellularLocation>
</comment>
<comment type="similarity">
    <text evidence="2">Belongs to the G-protein coupled receptor 1 family.</text>
</comment>
<comment type="caution">
    <text evidence="3">Could be the product of a pseudogene.</text>
</comment>
<comment type="caution">
    <text evidence="3">It is uncertain whether Met-1 or Met-16 is the initiator.</text>
</comment>
<comment type="online information" name="Human Olfactory Receptor Data Exploratorium (HORDE)">
    <link uri="http://genome.weizmann.ac.il/horde/card/index/symbol:OR52L2P"/>
</comment>
<dbReference type="EMBL" id="AB065820">
    <property type="protein sequence ID" value="BAC06039.1"/>
    <property type="molecule type" value="Genomic_DNA"/>
</dbReference>
<dbReference type="EMBL" id="BK004254">
    <property type="protein sequence ID" value="DAA04652.1"/>
    <property type="molecule type" value="Genomic_DNA"/>
</dbReference>
<dbReference type="SMR" id="Q8NGH6"/>
<dbReference type="FunCoup" id="Q8NGH6">
    <property type="interactions" value="620"/>
</dbReference>
<dbReference type="GlyCosmos" id="Q8NGH6">
    <property type="glycosylation" value="1 site, No reported glycans"/>
</dbReference>
<dbReference type="GlyGen" id="Q8NGH6">
    <property type="glycosylation" value="1 site"/>
</dbReference>
<dbReference type="BioMuta" id="HGNC:14788"/>
<dbReference type="DMDM" id="218512127"/>
<dbReference type="ProteomicsDB" id="73513"/>
<dbReference type="AGR" id="HGNC:14788"/>
<dbReference type="GeneCards" id="OR52L2P"/>
<dbReference type="HGNC" id="HGNC:14788">
    <property type="gene designation" value="OR52L2P"/>
</dbReference>
<dbReference type="neXtProt" id="NX_Q8NGH6"/>
<dbReference type="InParanoid" id="Q8NGH6"/>
<dbReference type="PAN-GO" id="Q8NGH6">
    <property type="GO annotations" value="0 GO annotations based on evolutionary models"/>
</dbReference>
<dbReference type="PhylomeDB" id="Q8NGH6"/>
<dbReference type="PathwayCommons" id="Q8NGH6"/>
<dbReference type="Reactome" id="R-HSA-9752946">
    <property type="pathway name" value="Expression and translocation of olfactory receptors"/>
</dbReference>
<dbReference type="Pharos" id="Q8NGH6">
    <property type="development level" value="Tdark"/>
</dbReference>
<dbReference type="Proteomes" id="UP000005640">
    <property type="component" value="Unplaced"/>
</dbReference>
<dbReference type="RNAct" id="Q8NGH6">
    <property type="molecule type" value="protein"/>
</dbReference>
<dbReference type="GO" id="GO:0005886">
    <property type="term" value="C:plasma membrane"/>
    <property type="evidence" value="ECO:0000318"/>
    <property type="project" value="GO_Central"/>
</dbReference>
<dbReference type="GO" id="GO:0004930">
    <property type="term" value="F:G protein-coupled receptor activity"/>
    <property type="evidence" value="ECO:0007669"/>
    <property type="project" value="UniProtKB-KW"/>
</dbReference>
<dbReference type="GO" id="GO:0004984">
    <property type="term" value="F:olfactory receptor activity"/>
    <property type="evidence" value="ECO:0000318"/>
    <property type="project" value="GO_Central"/>
</dbReference>
<dbReference type="FunFam" id="1.20.1070.10:FF:000006">
    <property type="entry name" value="Olfactory receptor"/>
    <property type="match status" value="1"/>
</dbReference>
<dbReference type="Gene3D" id="1.20.1070.10">
    <property type="entry name" value="Rhodopsin 7-helix transmembrane proteins"/>
    <property type="match status" value="1"/>
</dbReference>
<dbReference type="InterPro" id="IPR000276">
    <property type="entry name" value="GPCR_Rhodpsn"/>
</dbReference>
<dbReference type="InterPro" id="IPR017452">
    <property type="entry name" value="GPCR_Rhodpsn_7TM"/>
</dbReference>
<dbReference type="InterPro" id="IPR000725">
    <property type="entry name" value="Olfact_rcpt"/>
</dbReference>
<dbReference type="InterPro" id="IPR050402">
    <property type="entry name" value="OR51/52/56-like"/>
</dbReference>
<dbReference type="PANTHER" id="PTHR26450:SF353">
    <property type="entry name" value="OLFACTORY RECEPTOR 52L2-RELATED"/>
    <property type="match status" value="1"/>
</dbReference>
<dbReference type="PANTHER" id="PTHR26450">
    <property type="entry name" value="OLFACTORY RECEPTOR 56B1-RELATED"/>
    <property type="match status" value="1"/>
</dbReference>
<dbReference type="Pfam" id="PF13853">
    <property type="entry name" value="7tm_4"/>
    <property type="match status" value="1"/>
</dbReference>
<dbReference type="PRINTS" id="PR00237">
    <property type="entry name" value="GPCRRHODOPSN"/>
</dbReference>
<dbReference type="PRINTS" id="PR00245">
    <property type="entry name" value="OLFACTORYR"/>
</dbReference>
<dbReference type="SUPFAM" id="SSF81321">
    <property type="entry name" value="Family A G protein-coupled receptor-like"/>
    <property type="match status" value="1"/>
</dbReference>
<dbReference type="PROSITE" id="PS00237">
    <property type="entry name" value="G_PROTEIN_RECEP_F1_1"/>
    <property type="match status" value="1"/>
</dbReference>
<dbReference type="PROSITE" id="PS50262">
    <property type="entry name" value="G_PROTEIN_RECEP_F1_2"/>
    <property type="match status" value="1"/>
</dbReference>
<sequence length="319" mass="35227">MNLDSFFSFLLKSLIMALSNSSWRLPQPSFFLVGIPGLEESQHWIALPLGILYLLALVGNVTILFIIWMDPSLHQSMYLFLSMLAAIDLVVASSTAPKALAVLLVRAQEIGYTVCLIQMFFTHAFSSMESGVLVAMALDRYVAICHPLHHSTILHPGVIGHIGMVVLVRGLLLLIPFLILLRKLIFCQATIIGHAYCEHMAVVKLACSETTVNRAYGLTVALLVVGLDVLAIGVSYAHILQAVLKVPGNEARLKAFSTCGSHVCVILVFYIPGMFSFLTHRFGHHVPHHVHVLLAILYRLVPPALNPLVYRVKTQKIHQ</sequence>
<protein>
    <recommendedName>
        <fullName>Putative olfactory receptor 52L2</fullName>
    </recommendedName>
    <alternativeName>
        <fullName>Olfactory receptor OR11-74</fullName>
    </alternativeName>
</protein>
<name>O52L2_HUMAN</name>